<feature type="chain" id="PRO_1000128980" description="Methylglyoxal synthase">
    <location>
        <begin position="1"/>
        <end position="130"/>
    </location>
</feature>
<feature type="domain" description="MGS-like" evidence="1">
    <location>
        <begin position="1"/>
        <end position="130"/>
    </location>
</feature>
<feature type="active site" description="Proton donor/acceptor" evidence="1">
    <location>
        <position position="63"/>
    </location>
</feature>
<feature type="binding site" evidence="1">
    <location>
        <position position="11"/>
    </location>
    <ligand>
        <name>substrate</name>
    </ligand>
</feature>
<feature type="binding site" evidence="1">
    <location>
        <position position="15"/>
    </location>
    <ligand>
        <name>substrate</name>
    </ligand>
</feature>
<feature type="binding site" evidence="1">
    <location>
        <begin position="37"/>
        <end position="40"/>
    </location>
    <ligand>
        <name>substrate</name>
    </ligand>
</feature>
<feature type="binding site" evidence="1">
    <location>
        <begin position="57"/>
        <end position="58"/>
    </location>
    <ligand>
        <name>substrate</name>
    </ligand>
</feature>
<feature type="binding site" evidence="1">
    <location>
        <position position="90"/>
    </location>
    <ligand>
        <name>substrate</name>
    </ligand>
</feature>
<reference key="1">
    <citation type="submission" date="2008-04" db="EMBL/GenBank/DDBJ databases">
        <title>Complete sequence of chromosome 1 of Burkholderia ambifaria MC40-6.</title>
        <authorList>
            <person name="Copeland A."/>
            <person name="Lucas S."/>
            <person name="Lapidus A."/>
            <person name="Glavina del Rio T."/>
            <person name="Dalin E."/>
            <person name="Tice H."/>
            <person name="Pitluck S."/>
            <person name="Chain P."/>
            <person name="Malfatti S."/>
            <person name="Shin M."/>
            <person name="Vergez L."/>
            <person name="Lang D."/>
            <person name="Schmutz J."/>
            <person name="Larimer F."/>
            <person name="Land M."/>
            <person name="Hauser L."/>
            <person name="Kyrpides N."/>
            <person name="Lykidis A."/>
            <person name="Ramette A."/>
            <person name="Konstantinidis K."/>
            <person name="Tiedje J."/>
            <person name="Richardson P."/>
        </authorList>
    </citation>
    <scope>NUCLEOTIDE SEQUENCE [LARGE SCALE GENOMIC DNA]</scope>
    <source>
        <strain>MC40-6</strain>
    </source>
</reference>
<sequence length="130" mass="13849">MSKPRIALIAHDAKKDDIVALTGQFRETLAQCRLVATGTTGGRIAAAHGLEVERKLSGPLGGDLQIGAELADGRVDIVVFLRDPMTAQPHDPDITALVRACDVHDVPVATNVATARMLLDDLARNMQDVC</sequence>
<accession>B1YU46</accession>
<dbReference type="EC" id="4.2.3.3" evidence="1"/>
<dbReference type="EMBL" id="CP001025">
    <property type="protein sequence ID" value="ACB64686.1"/>
    <property type="molecule type" value="Genomic_DNA"/>
</dbReference>
<dbReference type="RefSeq" id="WP_006752212.1">
    <property type="nucleotide sequence ID" value="NC_010551.1"/>
</dbReference>
<dbReference type="SMR" id="B1YU46"/>
<dbReference type="KEGG" id="bac:BamMC406_2207"/>
<dbReference type="HOGENOM" id="CLU_120420_1_0_4"/>
<dbReference type="OrthoDB" id="9787147at2"/>
<dbReference type="Proteomes" id="UP000001680">
    <property type="component" value="Chromosome 1"/>
</dbReference>
<dbReference type="GO" id="GO:0005829">
    <property type="term" value="C:cytosol"/>
    <property type="evidence" value="ECO:0007669"/>
    <property type="project" value="TreeGrafter"/>
</dbReference>
<dbReference type="GO" id="GO:0008929">
    <property type="term" value="F:methylglyoxal synthase activity"/>
    <property type="evidence" value="ECO:0007669"/>
    <property type="project" value="UniProtKB-UniRule"/>
</dbReference>
<dbReference type="GO" id="GO:0019242">
    <property type="term" value="P:methylglyoxal biosynthetic process"/>
    <property type="evidence" value="ECO:0007669"/>
    <property type="project" value="UniProtKB-UniRule"/>
</dbReference>
<dbReference type="CDD" id="cd01422">
    <property type="entry name" value="MGS"/>
    <property type="match status" value="1"/>
</dbReference>
<dbReference type="Gene3D" id="3.40.50.1380">
    <property type="entry name" value="Methylglyoxal synthase-like domain"/>
    <property type="match status" value="1"/>
</dbReference>
<dbReference type="HAMAP" id="MF_00549">
    <property type="entry name" value="Methylglyoxal_synth"/>
    <property type="match status" value="1"/>
</dbReference>
<dbReference type="InterPro" id="IPR004363">
    <property type="entry name" value="Methylgl_synth"/>
</dbReference>
<dbReference type="InterPro" id="IPR018148">
    <property type="entry name" value="Methylglyoxal_synth_AS"/>
</dbReference>
<dbReference type="InterPro" id="IPR011607">
    <property type="entry name" value="MGS-like_dom"/>
</dbReference>
<dbReference type="InterPro" id="IPR036914">
    <property type="entry name" value="MGS-like_dom_sf"/>
</dbReference>
<dbReference type="NCBIfam" id="TIGR00160">
    <property type="entry name" value="MGSA"/>
    <property type="match status" value="1"/>
</dbReference>
<dbReference type="NCBIfam" id="NF003559">
    <property type="entry name" value="PRK05234.1"/>
    <property type="match status" value="1"/>
</dbReference>
<dbReference type="PANTHER" id="PTHR30492">
    <property type="entry name" value="METHYLGLYOXAL SYNTHASE"/>
    <property type="match status" value="1"/>
</dbReference>
<dbReference type="PANTHER" id="PTHR30492:SF0">
    <property type="entry name" value="METHYLGLYOXAL SYNTHASE"/>
    <property type="match status" value="1"/>
</dbReference>
<dbReference type="Pfam" id="PF02142">
    <property type="entry name" value="MGS"/>
    <property type="match status" value="1"/>
</dbReference>
<dbReference type="PIRSF" id="PIRSF006614">
    <property type="entry name" value="Methylglyox_syn"/>
    <property type="match status" value="1"/>
</dbReference>
<dbReference type="SMART" id="SM00851">
    <property type="entry name" value="MGS"/>
    <property type="match status" value="1"/>
</dbReference>
<dbReference type="SUPFAM" id="SSF52335">
    <property type="entry name" value="Methylglyoxal synthase-like"/>
    <property type="match status" value="1"/>
</dbReference>
<dbReference type="PROSITE" id="PS01335">
    <property type="entry name" value="METHYLGLYOXAL_SYNTH"/>
    <property type="match status" value="1"/>
</dbReference>
<dbReference type="PROSITE" id="PS51855">
    <property type="entry name" value="MGS"/>
    <property type="match status" value="1"/>
</dbReference>
<comment type="function">
    <text evidence="1">Catalyzes the formation of methylglyoxal from dihydroxyacetone phosphate.</text>
</comment>
<comment type="catalytic activity">
    <reaction evidence="1">
        <text>dihydroxyacetone phosphate = methylglyoxal + phosphate</text>
        <dbReference type="Rhea" id="RHEA:17937"/>
        <dbReference type="ChEBI" id="CHEBI:17158"/>
        <dbReference type="ChEBI" id="CHEBI:43474"/>
        <dbReference type="ChEBI" id="CHEBI:57642"/>
        <dbReference type="EC" id="4.2.3.3"/>
    </reaction>
</comment>
<comment type="similarity">
    <text evidence="1">Belongs to the methylglyoxal synthase family.</text>
</comment>
<name>MGSA_BURA4</name>
<keyword id="KW-0456">Lyase</keyword>
<organism>
    <name type="scientific">Burkholderia ambifaria (strain MC40-6)</name>
    <dbReference type="NCBI Taxonomy" id="398577"/>
    <lineage>
        <taxon>Bacteria</taxon>
        <taxon>Pseudomonadati</taxon>
        <taxon>Pseudomonadota</taxon>
        <taxon>Betaproteobacteria</taxon>
        <taxon>Burkholderiales</taxon>
        <taxon>Burkholderiaceae</taxon>
        <taxon>Burkholderia</taxon>
        <taxon>Burkholderia cepacia complex</taxon>
    </lineage>
</organism>
<gene>
    <name evidence="1" type="primary">mgsA</name>
    <name type="ordered locus">BamMC406_2207</name>
</gene>
<evidence type="ECO:0000255" key="1">
    <source>
        <dbReference type="HAMAP-Rule" id="MF_00549"/>
    </source>
</evidence>
<proteinExistence type="inferred from homology"/>
<protein>
    <recommendedName>
        <fullName evidence="1">Methylglyoxal synthase</fullName>
        <shortName evidence="1">MGS</shortName>
        <ecNumber evidence="1">4.2.3.3</ecNumber>
    </recommendedName>
</protein>